<sequence length="641" mass="69023">MAKVIGIDLGTTNSCVSVMDGKDAKVIENAEGARTTPSMVAFTEDGERLVGQPAKRQAVTNPENTLFAIKRLIGRTFEDPTTQKDKGMVPYKIVKADNGDAWVEAHDKSYSPSQISAMILQKMKETAESYLGEKVEKAVITVPAYFNDAQRQATKDAGKIAGLDVLRIINEPTAAALAYGLDKKEGKTIAVYDLGGGTFDISVLEIGDGVFEVKSTNGDTFLGGEDFDMRLVEYLASEFKKEQGIDLKNDKLALQRLKEAAEKAKIELSSSQQTEINLPFITADASGPKHLTMKLSRAKFESLVDDLIQKTIAPCKAALKDAGVSAAEIDEVVLVGGMTRMPKVQETVKQLFGKEPHKGVNPDEVVAMGAAIQAGVLQGDVKDVLLLDVTPLSLGIETLGGVFTRLIERNTTIPTKKSQVFSTADDNQSAVTIRVSQGEREMAADNKLLGQFDLVGIPPAPRGVPQIEVTFDIDANGIVQVSAKDKGTGKEHQIRIQASGGLSDAEIEKMVKDAEANAEADKKRREGVEAKNQAESLVHSSEKSLQEHGDKVSETDRKAIEDAIAALKSAVEASEPDAEDIKAKTNTLMEVSMKLGQAIYEAQQTESAHADAAADAKRSGDDVVDADYEEVKDEDDRKRSA</sequence>
<comment type="function">
    <text evidence="1">Acts as a chaperone.</text>
</comment>
<comment type="induction">
    <text evidence="1">By stress conditions e.g. heat shock.</text>
</comment>
<comment type="similarity">
    <text evidence="1">Belongs to the heat shock protein 70 family.</text>
</comment>
<protein>
    <recommendedName>
        <fullName evidence="1">Chaperone protein DnaK</fullName>
    </recommendedName>
    <alternativeName>
        <fullName evidence="1">HSP70</fullName>
    </alternativeName>
    <alternativeName>
        <fullName evidence="1">Heat shock 70 kDa protein</fullName>
    </alternativeName>
    <alternativeName>
        <fullName evidence="1">Heat shock protein 70</fullName>
    </alternativeName>
</protein>
<evidence type="ECO:0000255" key="1">
    <source>
        <dbReference type="HAMAP-Rule" id="MF_00332"/>
    </source>
</evidence>
<evidence type="ECO:0000256" key="2">
    <source>
        <dbReference type="SAM" id="MobiDB-lite"/>
    </source>
</evidence>
<feature type="chain" id="PRO_1000059671" description="Chaperone protein DnaK">
    <location>
        <begin position="1"/>
        <end position="641"/>
    </location>
</feature>
<feature type="region of interest" description="Disordered" evidence="2">
    <location>
        <begin position="514"/>
        <end position="554"/>
    </location>
</feature>
<feature type="region of interest" description="Disordered" evidence="2">
    <location>
        <begin position="604"/>
        <end position="641"/>
    </location>
</feature>
<feature type="compositionally biased region" description="Basic and acidic residues" evidence="2">
    <location>
        <begin position="514"/>
        <end position="529"/>
    </location>
</feature>
<feature type="compositionally biased region" description="Basic and acidic residues" evidence="2">
    <location>
        <begin position="540"/>
        <end position="554"/>
    </location>
</feature>
<feature type="compositionally biased region" description="Basic and acidic residues" evidence="2">
    <location>
        <begin position="608"/>
        <end position="621"/>
    </location>
</feature>
<feature type="compositionally biased region" description="Acidic residues" evidence="2">
    <location>
        <begin position="622"/>
        <end position="633"/>
    </location>
</feature>
<feature type="modified residue" description="Phosphothreonine; by autocatalysis" evidence="1">
    <location>
        <position position="198"/>
    </location>
</feature>
<name>DNAK_SINMW</name>
<keyword id="KW-0067">ATP-binding</keyword>
<keyword id="KW-0143">Chaperone</keyword>
<keyword id="KW-0547">Nucleotide-binding</keyword>
<keyword id="KW-0597">Phosphoprotein</keyword>
<keyword id="KW-0346">Stress response</keyword>
<reference key="1">
    <citation type="submission" date="2007-06" db="EMBL/GenBank/DDBJ databases">
        <title>Complete sequence of Sinorhizobium medicae WSM419 chromosome.</title>
        <authorList>
            <consortium name="US DOE Joint Genome Institute"/>
            <person name="Copeland A."/>
            <person name="Lucas S."/>
            <person name="Lapidus A."/>
            <person name="Barry K."/>
            <person name="Glavina del Rio T."/>
            <person name="Dalin E."/>
            <person name="Tice H."/>
            <person name="Pitluck S."/>
            <person name="Chain P."/>
            <person name="Malfatti S."/>
            <person name="Shin M."/>
            <person name="Vergez L."/>
            <person name="Schmutz J."/>
            <person name="Larimer F."/>
            <person name="Land M."/>
            <person name="Hauser L."/>
            <person name="Kyrpides N."/>
            <person name="Mikhailova N."/>
            <person name="Reeve W.G."/>
            <person name="Richardson P."/>
        </authorList>
    </citation>
    <scope>NUCLEOTIDE SEQUENCE [LARGE SCALE GENOMIC DNA]</scope>
    <source>
        <strain>WSM419</strain>
    </source>
</reference>
<organism>
    <name type="scientific">Sinorhizobium medicae (strain WSM419)</name>
    <name type="common">Ensifer medicae</name>
    <dbReference type="NCBI Taxonomy" id="366394"/>
    <lineage>
        <taxon>Bacteria</taxon>
        <taxon>Pseudomonadati</taxon>
        <taxon>Pseudomonadota</taxon>
        <taxon>Alphaproteobacteria</taxon>
        <taxon>Hyphomicrobiales</taxon>
        <taxon>Rhizobiaceae</taxon>
        <taxon>Sinorhizobium/Ensifer group</taxon>
        <taxon>Sinorhizobium</taxon>
    </lineage>
</organism>
<proteinExistence type="inferred from homology"/>
<gene>
    <name evidence="1" type="primary">dnaK</name>
    <name type="ordered locus">Smed_3389</name>
</gene>
<accession>A6UEY0</accession>
<dbReference type="EMBL" id="CP000738">
    <property type="protein sequence ID" value="ABR62210.1"/>
    <property type="molecule type" value="Genomic_DNA"/>
</dbReference>
<dbReference type="RefSeq" id="WP_012067591.1">
    <property type="nucleotide sequence ID" value="NC_009636.1"/>
</dbReference>
<dbReference type="RefSeq" id="YP_001329045.1">
    <property type="nucleotide sequence ID" value="NC_009636.1"/>
</dbReference>
<dbReference type="SMR" id="A6UEY0"/>
<dbReference type="STRING" id="366394.Smed_3389"/>
<dbReference type="GeneID" id="61610940"/>
<dbReference type="KEGG" id="smd:Smed_3389"/>
<dbReference type="PATRIC" id="fig|366394.8.peg.6635"/>
<dbReference type="eggNOG" id="COG0443">
    <property type="taxonomic scope" value="Bacteria"/>
</dbReference>
<dbReference type="HOGENOM" id="CLU_005965_2_1_5"/>
<dbReference type="OrthoDB" id="9766019at2"/>
<dbReference type="Proteomes" id="UP000001108">
    <property type="component" value="Chromosome"/>
</dbReference>
<dbReference type="GO" id="GO:0005524">
    <property type="term" value="F:ATP binding"/>
    <property type="evidence" value="ECO:0007669"/>
    <property type="project" value="UniProtKB-UniRule"/>
</dbReference>
<dbReference type="GO" id="GO:0140662">
    <property type="term" value="F:ATP-dependent protein folding chaperone"/>
    <property type="evidence" value="ECO:0007669"/>
    <property type="project" value="InterPro"/>
</dbReference>
<dbReference type="GO" id="GO:0051082">
    <property type="term" value="F:unfolded protein binding"/>
    <property type="evidence" value="ECO:0007669"/>
    <property type="project" value="InterPro"/>
</dbReference>
<dbReference type="CDD" id="cd11733">
    <property type="entry name" value="ASKHA_NBD_HSP70_HSPA9"/>
    <property type="match status" value="1"/>
</dbReference>
<dbReference type="FunFam" id="2.60.34.10:FF:000014">
    <property type="entry name" value="Chaperone protein DnaK HSP70"/>
    <property type="match status" value="1"/>
</dbReference>
<dbReference type="FunFam" id="3.30.420.40:FF:000020">
    <property type="entry name" value="Chaperone protein HscA homolog"/>
    <property type="match status" value="1"/>
</dbReference>
<dbReference type="FunFam" id="1.20.1270.10:FF:000001">
    <property type="entry name" value="Molecular chaperone DnaK"/>
    <property type="match status" value="1"/>
</dbReference>
<dbReference type="FunFam" id="3.30.420.40:FF:000004">
    <property type="entry name" value="Molecular chaperone DnaK"/>
    <property type="match status" value="1"/>
</dbReference>
<dbReference type="FunFam" id="3.90.640.10:FF:000003">
    <property type="entry name" value="Molecular chaperone DnaK"/>
    <property type="match status" value="1"/>
</dbReference>
<dbReference type="Gene3D" id="1.20.1270.10">
    <property type="match status" value="1"/>
</dbReference>
<dbReference type="Gene3D" id="3.30.420.40">
    <property type="match status" value="2"/>
</dbReference>
<dbReference type="Gene3D" id="3.90.640.10">
    <property type="entry name" value="Actin, Chain A, domain 4"/>
    <property type="match status" value="1"/>
</dbReference>
<dbReference type="Gene3D" id="2.60.34.10">
    <property type="entry name" value="Substrate Binding Domain Of DNAk, Chain A, domain 1"/>
    <property type="match status" value="1"/>
</dbReference>
<dbReference type="HAMAP" id="MF_00332">
    <property type="entry name" value="DnaK"/>
    <property type="match status" value="1"/>
</dbReference>
<dbReference type="InterPro" id="IPR043129">
    <property type="entry name" value="ATPase_NBD"/>
</dbReference>
<dbReference type="InterPro" id="IPR012725">
    <property type="entry name" value="Chaperone_DnaK"/>
</dbReference>
<dbReference type="InterPro" id="IPR018181">
    <property type="entry name" value="Heat_shock_70_CS"/>
</dbReference>
<dbReference type="InterPro" id="IPR029048">
    <property type="entry name" value="HSP70_C_sf"/>
</dbReference>
<dbReference type="InterPro" id="IPR029047">
    <property type="entry name" value="HSP70_peptide-bd_sf"/>
</dbReference>
<dbReference type="InterPro" id="IPR013126">
    <property type="entry name" value="Hsp_70_fam"/>
</dbReference>
<dbReference type="NCBIfam" id="NF001413">
    <property type="entry name" value="PRK00290.1"/>
    <property type="match status" value="1"/>
</dbReference>
<dbReference type="NCBIfam" id="NF003520">
    <property type="entry name" value="PRK05183.1"/>
    <property type="match status" value="1"/>
</dbReference>
<dbReference type="NCBIfam" id="TIGR02350">
    <property type="entry name" value="prok_dnaK"/>
    <property type="match status" value="1"/>
</dbReference>
<dbReference type="PANTHER" id="PTHR19375">
    <property type="entry name" value="HEAT SHOCK PROTEIN 70KDA"/>
    <property type="match status" value="1"/>
</dbReference>
<dbReference type="Pfam" id="PF00012">
    <property type="entry name" value="HSP70"/>
    <property type="match status" value="1"/>
</dbReference>
<dbReference type="PRINTS" id="PR00301">
    <property type="entry name" value="HEATSHOCK70"/>
</dbReference>
<dbReference type="SUPFAM" id="SSF53067">
    <property type="entry name" value="Actin-like ATPase domain"/>
    <property type="match status" value="2"/>
</dbReference>
<dbReference type="SUPFAM" id="SSF100934">
    <property type="entry name" value="Heat shock protein 70kD (HSP70), C-terminal subdomain"/>
    <property type="match status" value="1"/>
</dbReference>
<dbReference type="SUPFAM" id="SSF100920">
    <property type="entry name" value="Heat shock protein 70kD (HSP70), peptide-binding domain"/>
    <property type="match status" value="1"/>
</dbReference>
<dbReference type="PROSITE" id="PS00297">
    <property type="entry name" value="HSP70_1"/>
    <property type="match status" value="1"/>
</dbReference>
<dbReference type="PROSITE" id="PS00329">
    <property type="entry name" value="HSP70_2"/>
    <property type="match status" value="1"/>
</dbReference>
<dbReference type="PROSITE" id="PS01036">
    <property type="entry name" value="HSP70_3"/>
    <property type="match status" value="1"/>
</dbReference>